<keyword id="KW-1048">Host nucleus</keyword>
<keyword id="KW-0426">Late protein</keyword>
<keyword id="KW-1185">Reference proteome</keyword>
<keyword id="KW-0946">Virion</keyword>
<keyword id="KW-0920">Virion tegument</keyword>
<accession>P09311</accession>
<protein>
    <recommendedName>
        <fullName>Virion protein US10 homolog</fullName>
    </recommendedName>
    <alternativeName>
        <fullName>Genes 64/69 protein</fullName>
    </alternativeName>
</protein>
<evidence type="ECO:0000250" key="1"/>
<evidence type="ECO:0000305" key="2"/>
<sequence length="180" mass="19869">MNLCGSRGEHPGGEYAGLYCTRHDTPAHQALMNDAERYFAAALCAISTEAYEAFIHSPSERPCASLWGRAKDAFGRMCGELAADRQRPPSVPPIRRAVLSLLREQCMPDPQSHLELSERLILMAYWCCLGHAGLPTIGLSPDNKCIRAELYDRPGGICHRLFDAYLGCGSLGVPRTYERS</sequence>
<feature type="chain" id="PRO_0000116152" description="Virion protein US10 homolog">
    <location>
        <begin position="1"/>
        <end position="180"/>
    </location>
</feature>
<proteinExistence type="evidence at transcript level"/>
<organism>
    <name type="scientific">Varicella-zoster virus (strain Dumas)</name>
    <name type="common">HHV-3</name>
    <name type="synonym">Human herpesvirus 3</name>
    <dbReference type="NCBI Taxonomy" id="10338"/>
    <lineage>
        <taxon>Viruses</taxon>
        <taxon>Duplodnaviria</taxon>
        <taxon>Heunggongvirae</taxon>
        <taxon>Peploviricota</taxon>
        <taxon>Herviviricetes</taxon>
        <taxon>Herpesvirales</taxon>
        <taxon>Orthoherpesviridae</taxon>
        <taxon>Alphaherpesvirinae</taxon>
        <taxon>Varicellovirus</taxon>
        <taxon>Varicellovirus humanalpha3</taxon>
        <taxon>Human herpesvirus 3</taxon>
    </lineage>
</organism>
<dbReference type="EMBL" id="X04370">
    <property type="protein sequence ID" value="CAA27952.1"/>
    <property type="molecule type" value="Genomic_DNA"/>
</dbReference>
<dbReference type="EMBL" id="X04370">
    <property type="protein sequence ID" value="CAA27947.1"/>
    <property type="molecule type" value="Genomic_DNA"/>
</dbReference>
<dbReference type="EMBL" id="X02132">
    <property type="protein sequence ID" value="CAA26046.1"/>
    <property type="molecule type" value="Genomic_DNA"/>
</dbReference>
<dbReference type="PIR" id="C27345">
    <property type="entry name" value="WZBE64"/>
</dbReference>
<dbReference type="KEGG" id="vg:1487701"/>
<dbReference type="KEGG" id="vg:1487710"/>
<dbReference type="Proteomes" id="UP000002602">
    <property type="component" value="Genome"/>
</dbReference>
<dbReference type="GO" id="GO:0044204">
    <property type="term" value="C:host cell nuclear matrix"/>
    <property type="evidence" value="ECO:0007669"/>
    <property type="project" value="UniProtKB-SubCell"/>
</dbReference>
<dbReference type="GO" id="GO:0019033">
    <property type="term" value="C:viral tegument"/>
    <property type="evidence" value="ECO:0007669"/>
    <property type="project" value="UniProtKB-SubCell"/>
</dbReference>
<dbReference type="GO" id="GO:0008270">
    <property type="term" value="F:zinc ion binding"/>
    <property type="evidence" value="ECO:0007669"/>
    <property type="project" value="InterPro"/>
</dbReference>
<dbReference type="InterPro" id="IPR000714">
    <property type="entry name" value="EHV_Unk"/>
</dbReference>
<dbReference type="Pfam" id="PF02053">
    <property type="entry name" value="Gene66"/>
    <property type="match status" value="1"/>
</dbReference>
<dbReference type="PRINTS" id="PR00957">
    <property type="entry name" value="GENE66"/>
</dbReference>
<organismHost>
    <name type="scientific">Homo sapiens</name>
    <name type="common">Human</name>
    <dbReference type="NCBI Taxonomy" id="9606"/>
</organismHost>
<reference key="1">
    <citation type="journal article" date="1986" name="J. Gen. Virol.">
        <title>The complete DNA sequence of varicella-zoster virus.</title>
        <authorList>
            <person name="Davison A.J."/>
            <person name="Scott J.E."/>
        </authorList>
    </citation>
    <scope>NUCLEOTIDE SEQUENCE [LARGE SCALE GENOMIC DNA]</scope>
</reference>
<reference key="2">
    <citation type="journal article" date="1985" name="J. Gen. Virol.">
        <title>DNA sequence of the major inverted repeat in the varicella-zoster virus genome.</title>
        <authorList>
            <person name="Davison A.J."/>
            <person name="Scott J.E."/>
        </authorList>
    </citation>
    <scope>NUCLEOTIDE SEQUENCE [GENOMIC DNA]</scope>
</reference>
<name>US10_VZVD</name>
<comment type="subcellular location">
    <subcellularLocation>
        <location evidence="1">Virion tegument</location>
    </subcellularLocation>
    <subcellularLocation>
        <location evidence="1">Host nucleus matrix</location>
    </subcellularLocation>
</comment>
<comment type="induction">
    <text>Expressed late in the infection cycle.</text>
</comment>
<comment type="PTM">
    <text evidence="1">Phosphorylated.</text>
</comment>
<comment type="similarity">
    <text evidence="2">Belongs to the herpesviridae US10 family.</text>
</comment>
<gene>
    <name type="primary">64</name>
</gene>
<gene>
    <name type="primary">69</name>
</gene>